<sequence length="565" mass="64626">MDYKKLVAERIKEHVDLELENIEKLIEIPPKPEMGDFAFPCFQLAKVMRKAPNMIAAELAEKINKEGFERVECLGPYLNFFVDKVAFSKNIISKVLEEGDKYGSSKIGEGKNVVVEYSSPNIAKPFHVGHLFTTAIGHSLYRMLNFEGYNPIRINHLGDWGTQFGKLISAYKRWGNEEALEEAPINELLRIYVKFHDEAENNPELEDEGRMYFKKLEDGDQEAVALWERFKDLSLKEFNKIYDMLGVDFDSWAGESFYNDKMDKVVEELEKANILTESNGAKVVMLDEYNMPPCIVVKSDGASIYATRDLAAASYRHKTYNFDKCIYVVGKDQILHFNQVFKTLELAGNEWAKNCVHIPFGLVKFADRKLSTRKGNVVLLEDLLNEAIDKTRETIEEKNPQLENKEEVAKKIGIGAILFTYLKNSRERDIVFDWKEMLSFDGETGPYVQYSYARAKSILRKAEEQKITAEPDFTKLTSKEEFELAKTLEGLQKAVILGIDKLEPSVVTRYSIEVAKAFNKFYNNHTVLNVEDEGLKAARLELIKATAQVIKNALFLIGIDVVEKM</sequence>
<comment type="catalytic activity">
    <reaction evidence="1">
        <text>tRNA(Arg) + L-arginine + ATP = L-arginyl-tRNA(Arg) + AMP + diphosphate</text>
        <dbReference type="Rhea" id="RHEA:20301"/>
        <dbReference type="Rhea" id="RHEA-COMP:9658"/>
        <dbReference type="Rhea" id="RHEA-COMP:9673"/>
        <dbReference type="ChEBI" id="CHEBI:30616"/>
        <dbReference type="ChEBI" id="CHEBI:32682"/>
        <dbReference type="ChEBI" id="CHEBI:33019"/>
        <dbReference type="ChEBI" id="CHEBI:78442"/>
        <dbReference type="ChEBI" id="CHEBI:78513"/>
        <dbReference type="ChEBI" id="CHEBI:456215"/>
        <dbReference type="EC" id="6.1.1.19"/>
    </reaction>
</comment>
<comment type="subunit">
    <text evidence="1">Monomer.</text>
</comment>
<comment type="subcellular location">
    <subcellularLocation>
        <location evidence="1">Cytoplasm</location>
    </subcellularLocation>
</comment>
<comment type="similarity">
    <text evidence="1">Belongs to the class-I aminoacyl-tRNA synthetase family.</text>
</comment>
<evidence type="ECO:0000255" key="1">
    <source>
        <dbReference type="HAMAP-Rule" id="MF_00123"/>
    </source>
</evidence>
<organism>
    <name type="scientific">Clostridium perfringens (strain 13 / Type A)</name>
    <dbReference type="NCBI Taxonomy" id="195102"/>
    <lineage>
        <taxon>Bacteria</taxon>
        <taxon>Bacillati</taxon>
        <taxon>Bacillota</taxon>
        <taxon>Clostridia</taxon>
        <taxon>Eubacteriales</taxon>
        <taxon>Clostridiaceae</taxon>
        <taxon>Clostridium</taxon>
    </lineage>
</organism>
<gene>
    <name evidence="1" type="primary">argS</name>
    <name type="ordered locus">CPE1661</name>
</gene>
<protein>
    <recommendedName>
        <fullName evidence="1">Arginine--tRNA ligase</fullName>
        <ecNumber evidence="1">6.1.1.19</ecNumber>
    </recommendedName>
    <alternativeName>
        <fullName evidence="1">Arginyl-tRNA synthetase</fullName>
        <shortName evidence="1">ArgRS</shortName>
    </alternativeName>
</protein>
<proteinExistence type="inferred from homology"/>
<feature type="chain" id="PRO_0000151551" description="Arginine--tRNA ligase">
    <location>
        <begin position="1"/>
        <end position="565"/>
    </location>
</feature>
<feature type="short sequence motif" description="'HIGH' region">
    <location>
        <begin position="120"/>
        <end position="130"/>
    </location>
</feature>
<dbReference type="EC" id="6.1.1.19" evidence="1"/>
<dbReference type="EMBL" id="BA000016">
    <property type="protein sequence ID" value="BAB81367.1"/>
    <property type="molecule type" value="Genomic_DNA"/>
</dbReference>
<dbReference type="RefSeq" id="WP_011010560.1">
    <property type="nucleotide sequence ID" value="NC_003366.1"/>
</dbReference>
<dbReference type="SMR" id="Q8XJU2"/>
<dbReference type="STRING" id="195102.gene:10490925"/>
<dbReference type="GeneID" id="93001801"/>
<dbReference type="KEGG" id="cpe:CPE1661"/>
<dbReference type="HOGENOM" id="CLU_006406_6_1_9"/>
<dbReference type="Proteomes" id="UP000000818">
    <property type="component" value="Chromosome"/>
</dbReference>
<dbReference type="GO" id="GO:0005737">
    <property type="term" value="C:cytoplasm"/>
    <property type="evidence" value="ECO:0007669"/>
    <property type="project" value="UniProtKB-SubCell"/>
</dbReference>
<dbReference type="GO" id="GO:0004814">
    <property type="term" value="F:arginine-tRNA ligase activity"/>
    <property type="evidence" value="ECO:0007669"/>
    <property type="project" value="UniProtKB-UniRule"/>
</dbReference>
<dbReference type="GO" id="GO:0005524">
    <property type="term" value="F:ATP binding"/>
    <property type="evidence" value="ECO:0007669"/>
    <property type="project" value="UniProtKB-UniRule"/>
</dbReference>
<dbReference type="GO" id="GO:0006420">
    <property type="term" value="P:arginyl-tRNA aminoacylation"/>
    <property type="evidence" value="ECO:0007669"/>
    <property type="project" value="UniProtKB-UniRule"/>
</dbReference>
<dbReference type="CDD" id="cd07956">
    <property type="entry name" value="Anticodon_Ia_Arg"/>
    <property type="match status" value="1"/>
</dbReference>
<dbReference type="CDD" id="cd00671">
    <property type="entry name" value="ArgRS_core"/>
    <property type="match status" value="1"/>
</dbReference>
<dbReference type="FunFam" id="1.10.730.10:FF:000008">
    <property type="entry name" value="Arginine--tRNA ligase"/>
    <property type="match status" value="1"/>
</dbReference>
<dbReference type="FunFam" id="3.40.50.620:FF:000116">
    <property type="entry name" value="Arginine--tRNA ligase"/>
    <property type="match status" value="1"/>
</dbReference>
<dbReference type="Gene3D" id="3.30.1360.70">
    <property type="entry name" value="Arginyl tRNA synthetase N-terminal domain"/>
    <property type="match status" value="1"/>
</dbReference>
<dbReference type="Gene3D" id="3.40.50.620">
    <property type="entry name" value="HUPs"/>
    <property type="match status" value="1"/>
</dbReference>
<dbReference type="Gene3D" id="1.10.730.10">
    <property type="entry name" value="Isoleucyl-tRNA Synthetase, Domain 1"/>
    <property type="match status" value="1"/>
</dbReference>
<dbReference type="HAMAP" id="MF_00123">
    <property type="entry name" value="Arg_tRNA_synth"/>
    <property type="match status" value="1"/>
</dbReference>
<dbReference type="InterPro" id="IPR001412">
    <property type="entry name" value="aa-tRNA-synth_I_CS"/>
</dbReference>
<dbReference type="InterPro" id="IPR001278">
    <property type="entry name" value="Arg-tRNA-ligase"/>
</dbReference>
<dbReference type="InterPro" id="IPR005148">
    <property type="entry name" value="Arg-tRNA-synth_N"/>
</dbReference>
<dbReference type="InterPro" id="IPR036695">
    <property type="entry name" value="Arg-tRNA-synth_N_sf"/>
</dbReference>
<dbReference type="InterPro" id="IPR035684">
    <property type="entry name" value="ArgRS_core"/>
</dbReference>
<dbReference type="InterPro" id="IPR008909">
    <property type="entry name" value="DALR_anticod-bd"/>
</dbReference>
<dbReference type="InterPro" id="IPR014729">
    <property type="entry name" value="Rossmann-like_a/b/a_fold"/>
</dbReference>
<dbReference type="InterPro" id="IPR009080">
    <property type="entry name" value="tRNAsynth_Ia_anticodon-bd"/>
</dbReference>
<dbReference type="NCBIfam" id="TIGR00456">
    <property type="entry name" value="argS"/>
    <property type="match status" value="1"/>
</dbReference>
<dbReference type="PANTHER" id="PTHR11956:SF5">
    <property type="entry name" value="ARGININE--TRNA LIGASE, CYTOPLASMIC"/>
    <property type="match status" value="1"/>
</dbReference>
<dbReference type="PANTHER" id="PTHR11956">
    <property type="entry name" value="ARGINYL-TRNA SYNTHETASE"/>
    <property type="match status" value="1"/>
</dbReference>
<dbReference type="Pfam" id="PF03485">
    <property type="entry name" value="Arg_tRNA_synt_N"/>
    <property type="match status" value="1"/>
</dbReference>
<dbReference type="Pfam" id="PF05746">
    <property type="entry name" value="DALR_1"/>
    <property type="match status" value="1"/>
</dbReference>
<dbReference type="Pfam" id="PF00750">
    <property type="entry name" value="tRNA-synt_1d"/>
    <property type="match status" value="1"/>
</dbReference>
<dbReference type="PRINTS" id="PR01038">
    <property type="entry name" value="TRNASYNTHARG"/>
</dbReference>
<dbReference type="SMART" id="SM01016">
    <property type="entry name" value="Arg_tRNA_synt_N"/>
    <property type="match status" value="1"/>
</dbReference>
<dbReference type="SMART" id="SM00836">
    <property type="entry name" value="DALR_1"/>
    <property type="match status" value="1"/>
</dbReference>
<dbReference type="SUPFAM" id="SSF47323">
    <property type="entry name" value="Anticodon-binding domain of a subclass of class I aminoacyl-tRNA synthetases"/>
    <property type="match status" value="1"/>
</dbReference>
<dbReference type="SUPFAM" id="SSF55190">
    <property type="entry name" value="Arginyl-tRNA synthetase (ArgRS), N-terminal 'additional' domain"/>
    <property type="match status" value="1"/>
</dbReference>
<dbReference type="SUPFAM" id="SSF52374">
    <property type="entry name" value="Nucleotidylyl transferase"/>
    <property type="match status" value="1"/>
</dbReference>
<dbReference type="PROSITE" id="PS00178">
    <property type="entry name" value="AA_TRNA_LIGASE_I"/>
    <property type="match status" value="1"/>
</dbReference>
<keyword id="KW-0030">Aminoacyl-tRNA synthetase</keyword>
<keyword id="KW-0067">ATP-binding</keyword>
<keyword id="KW-0963">Cytoplasm</keyword>
<keyword id="KW-0436">Ligase</keyword>
<keyword id="KW-0547">Nucleotide-binding</keyword>
<keyword id="KW-0648">Protein biosynthesis</keyword>
<keyword id="KW-1185">Reference proteome</keyword>
<reference key="1">
    <citation type="journal article" date="2002" name="Proc. Natl. Acad. Sci. U.S.A.">
        <title>Complete genome sequence of Clostridium perfringens, an anaerobic flesh-eater.</title>
        <authorList>
            <person name="Shimizu T."/>
            <person name="Ohtani K."/>
            <person name="Hirakawa H."/>
            <person name="Ohshima K."/>
            <person name="Yamashita A."/>
            <person name="Shiba T."/>
            <person name="Ogasawara N."/>
            <person name="Hattori M."/>
            <person name="Kuhara S."/>
            <person name="Hayashi H."/>
        </authorList>
    </citation>
    <scope>NUCLEOTIDE SEQUENCE [LARGE SCALE GENOMIC DNA]</scope>
    <source>
        <strain>13 / Type A</strain>
    </source>
</reference>
<name>SYR_CLOPE</name>
<accession>Q8XJU2</accession>